<comment type="similarity">
    <text evidence="2">Belongs to the UPF0758 family.</text>
</comment>
<organism>
    <name type="scientific">Herminiimonas arsenicoxydans</name>
    <dbReference type="NCBI Taxonomy" id="204773"/>
    <lineage>
        <taxon>Bacteria</taxon>
        <taxon>Pseudomonadati</taxon>
        <taxon>Pseudomonadota</taxon>
        <taxon>Betaproteobacteria</taxon>
        <taxon>Burkholderiales</taxon>
        <taxon>Oxalobacteraceae</taxon>
        <taxon>Herminiimonas</taxon>
    </lineage>
</organism>
<gene>
    <name type="ordered locus">HEAR2468</name>
</gene>
<proteinExistence type="inferred from homology"/>
<protein>
    <recommendedName>
        <fullName>UPF0758 protein HEAR2468</fullName>
    </recommendedName>
</protein>
<accession>A4G7V9</accession>
<dbReference type="EMBL" id="CU207211">
    <property type="protein sequence ID" value="CAL62596.1"/>
    <property type="molecule type" value="Genomic_DNA"/>
</dbReference>
<dbReference type="SMR" id="A4G7V9"/>
<dbReference type="STRING" id="204773.HEAR2468"/>
<dbReference type="KEGG" id="har:HEAR2468"/>
<dbReference type="eggNOG" id="COG2003">
    <property type="taxonomic scope" value="Bacteria"/>
</dbReference>
<dbReference type="HOGENOM" id="CLU_073529_0_1_4"/>
<dbReference type="OrthoDB" id="9804482at2"/>
<dbReference type="Proteomes" id="UP000006697">
    <property type="component" value="Chromosome"/>
</dbReference>
<dbReference type="GO" id="GO:0046872">
    <property type="term" value="F:metal ion binding"/>
    <property type="evidence" value="ECO:0007669"/>
    <property type="project" value="UniProtKB-KW"/>
</dbReference>
<dbReference type="GO" id="GO:0008237">
    <property type="term" value="F:metallopeptidase activity"/>
    <property type="evidence" value="ECO:0007669"/>
    <property type="project" value="UniProtKB-KW"/>
</dbReference>
<dbReference type="GO" id="GO:0006508">
    <property type="term" value="P:proteolysis"/>
    <property type="evidence" value="ECO:0007669"/>
    <property type="project" value="UniProtKB-KW"/>
</dbReference>
<dbReference type="CDD" id="cd08071">
    <property type="entry name" value="MPN_DUF2466"/>
    <property type="match status" value="1"/>
</dbReference>
<dbReference type="Gene3D" id="1.10.150.20">
    <property type="entry name" value="5' to 3' exonuclease, C-terminal subdomain"/>
    <property type="match status" value="1"/>
</dbReference>
<dbReference type="Gene3D" id="3.40.140.10">
    <property type="entry name" value="Cytidine Deaminase, domain 2"/>
    <property type="match status" value="1"/>
</dbReference>
<dbReference type="InterPro" id="IPR037518">
    <property type="entry name" value="MPN"/>
</dbReference>
<dbReference type="InterPro" id="IPR025657">
    <property type="entry name" value="RadC_JAB"/>
</dbReference>
<dbReference type="InterPro" id="IPR010994">
    <property type="entry name" value="RuvA_2-like"/>
</dbReference>
<dbReference type="InterPro" id="IPR001405">
    <property type="entry name" value="UPF0758"/>
</dbReference>
<dbReference type="InterPro" id="IPR020891">
    <property type="entry name" value="UPF0758_CS"/>
</dbReference>
<dbReference type="InterPro" id="IPR046778">
    <property type="entry name" value="UPF0758_N"/>
</dbReference>
<dbReference type="NCBIfam" id="NF000642">
    <property type="entry name" value="PRK00024.1"/>
    <property type="match status" value="1"/>
</dbReference>
<dbReference type="NCBIfam" id="TIGR00608">
    <property type="entry name" value="radc"/>
    <property type="match status" value="1"/>
</dbReference>
<dbReference type="PANTHER" id="PTHR30471">
    <property type="entry name" value="DNA REPAIR PROTEIN RADC"/>
    <property type="match status" value="1"/>
</dbReference>
<dbReference type="PANTHER" id="PTHR30471:SF3">
    <property type="entry name" value="UPF0758 PROTEIN YEES-RELATED"/>
    <property type="match status" value="1"/>
</dbReference>
<dbReference type="Pfam" id="PF04002">
    <property type="entry name" value="RadC"/>
    <property type="match status" value="1"/>
</dbReference>
<dbReference type="Pfam" id="PF20582">
    <property type="entry name" value="UPF0758_N"/>
    <property type="match status" value="1"/>
</dbReference>
<dbReference type="SUPFAM" id="SSF102712">
    <property type="entry name" value="JAB1/MPN domain"/>
    <property type="match status" value="1"/>
</dbReference>
<dbReference type="SUPFAM" id="SSF47781">
    <property type="entry name" value="RuvA domain 2-like"/>
    <property type="match status" value="1"/>
</dbReference>
<dbReference type="PROSITE" id="PS50249">
    <property type="entry name" value="MPN"/>
    <property type="match status" value="1"/>
</dbReference>
<dbReference type="PROSITE" id="PS01302">
    <property type="entry name" value="UPF0758"/>
    <property type="match status" value="1"/>
</dbReference>
<keyword id="KW-0378">Hydrolase</keyword>
<keyword id="KW-0479">Metal-binding</keyword>
<keyword id="KW-0482">Metalloprotease</keyword>
<keyword id="KW-0645">Protease</keyword>
<keyword id="KW-1185">Reference proteome</keyword>
<keyword id="KW-0862">Zinc</keyword>
<feature type="chain" id="PRO_1000001660" description="UPF0758 protein HEAR2468">
    <location>
        <begin position="1"/>
        <end position="224"/>
    </location>
</feature>
<feature type="domain" description="MPN" evidence="1">
    <location>
        <begin position="102"/>
        <end position="224"/>
    </location>
</feature>
<feature type="short sequence motif" description="JAMM motif" evidence="1">
    <location>
        <begin position="173"/>
        <end position="186"/>
    </location>
</feature>
<feature type="binding site" evidence="1">
    <location>
        <position position="173"/>
    </location>
    <ligand>
        <name>Zn(2+)</name>
        <dbReference type="ChEBI" id="CHEBI:29105"/>
        <note>catalytic</note>
    </ligand>
</feature>
<feature type="binding site" evidence="1">
    <location>
        <position position="175"/>
    </location>
    <ligand>
        <name>Zn(2+)</name>
        <dbReference type="ChEBI" id="CHEBI:29105"/>
        <note>catalytic</note>
    </ligand>
</feature>
<feature type="binding site" evidence="1">
    <location>
        <position position="186"/>
    </location>
    <ligand>
        <name>Zn(2+)</name>
        <dbReference type="ChEBI" id="CHEBI:29105"/>
        <note>catalytic</note>
    </ligand>
</feature>
<sequence length="224" mass="24460">MAITDWPEEQRPRERLIRHGAAILSDAELLAVFLRVGVTGKSAVDLGRDMVAHFGSLNGLFSATLNDFSKINGLGPAKYAQLQAVLELARRSLCEELQAGVALNSPQAVKQYLQLLLSGRAYESFVILFLDVKNRLIVCDEMFRGTLTHTSVYPREIVKAALGHNAASVILAHNHPSGTPEPSAADQTLTQALKQALMLIDVRVLDHFVVAGKQVYSFAEQGQL</sequence>
<evidence type="ECO:0000255" key="1">
    <source>
        <dbReference type="PROSITE-ProRule" id="PRU01182"/>
    </source>
</evidence>
<evidence type="ECO:0000305" key="2"/>
<name>Y2468_HERAR</name>
<reference key="1">
    <citation type="journal article" date="2007" name="PLoS Genet.">
        <title>A tale of two oxidation states: bacterial colonization of arsenic-rich environments.</title>
        <authorList>
            <person name="Muller D."/>
            <person name="Medigue C."/>
            <person name="Koechler S."/>
            <person name="Barbe V."/>
            <person name="Barakat M."/>
            <person name="Talla E."/>
            <person name="Bonnefoy V."/>
            <person name="Krin E."/>
            <person name="Arsene-Ploetze F."/>
            <person name="Carapito C."/>
            <person name="Chandler M."/>
            <person name="Cournoyer B."/>
            <person name="Cruveiller S."/>
            <person name="Dossat C."/>
            <person name="Duval S."/>
            <person name="Heymann M."/>
            <person name="Leize E."/>
            <person name="Lieutaud A."/>
            <person name="Lievremont D."/>
            <person name="Makita Y."/>
            <person name="Mangenot S."/>
            <person name="Nitschke W."/>
            <person name="Ortet P."/>
            <person name="Perdrial N."/>
            <person name="Schoepp B."/>
            <person name="Siguier P."/>
            <person name="Simeonova D.D."/>
            <person name="Rouy Z."/>
            <person name="Segurens B."/>
            <person name="Turlin E."/>
            <person name="Vallenet D."/>
            <person name="van Dorsselaer A."/>
            <person name="Weiss S."/>
            <person name="Weissenbach J."/>
            <person name="Lett M.-C."/>
            <person name="Danchin A."/>
            <person name="Bertin P.N."/>
        </authorList>
    </citation>
    <scope>NUCLEOTIDE SEQUENCE [LARGE SCALE GENOMIC DNA]</scope>
    <source>
        <strain>ULPAs1</strain>
    </source>
</reference>